<dbReference type="EMBL" id="CP000323">
    <property type="protein sequence ID" value="ABE75190.1"/>
    <property type="molecule type" value="Genomic_DNA"/>
</dbReference>
<dbReference type="RefSeq" id="WP_011513742.1">
    <property type="nucleotide sequence ID" value="NC_007969.1"/>
</dbReference>
<dbReference type="SMR" id="Q1QAW3"/>
<dbReference type="STRING" id="335284.Pcryo_1411"/>
<dbReference type="KEGG" id="pcr:Pcryo_1411"/>
<dbReference type="eggNOG" id="COG0216">
    <property type="taxonomic scope" value="Bacteria"/>
</dbReference>
<dbReference type="HOGENOM" id="CLU_036856_0_1_6"/>
<dbReference type="Proteomes" id="UP000002425">
    <property type="component" value="Chromosome"/>
</dbReference>
<dbReference type="GO" id="GO:0005737">
    <property type="term" value="C:cytoplasm"/>
    <property type="evidence" value="ECO:0007669"/>
    <property type="project" value="UniProtKB-SubCell"/>
</dbReference>
<dbReference type="GO" id="GO:0016149">
    <property type="term" value="F:translation release factor activity, codon specific"/>
    <property type="evidence" value="ECO:0007669"/>
    <property type="project" value="UniProtKB-UniRule"/>
</dbReference>
<dbReference type="FunFam" id="3.30.160.20:FF:000004">
    <property type="entry name" value="Peptide chain release factor 1"/>
    <property type="match status" value="1"/>
</dbReference>
<dbReference type="FunFam" id="3.30.70.1660:FF:000002">
    <property type="entry name" value="Peptide chain release factor 1"/>
    <property type="match status" value="1"/>
</dbReference>
<dbReference type="FunFam" id="3.30.70.1660:FF:000004">
    <property type="entry name" value="Peptide chain release factor 1"/>
    <property type="match status" value="1"/>
</dbReference>
<dbReference type="Gene3D" id="3.30.160.20">
    <property type="match status" value="1"/>
</dbReference>
<dbReference type="Gene3D" id="3.30.70.1660">
    <property type="match status" value="1"/>
</dbReference>
<dbReference type="Gene3D" id="6.10.140.1950">
    <property type="match status" value="1"/>
</dbReference>
<dbReference type="HAMAP" id="MF_00093">
    <property type="entry name" value="Rel_fac_1"/>
    <property type="match status" value="1"/>
</dbReference>
<dbReference type="InterPro" id="IPR005139">
    <property type="entry name" value="PCRF"/>
</dbReference>
<dbReference type="InterPro" id="IPR000352">
    <property type="entry name" value="Pep_chain_release_fac_I"/>
</dbReference>
<dbReference type="InterPro" id="IPR045853">
    <property type="entry name" value="Pep_chain_release_fac_I_sf"/>
</dbReference>
<dbReference type="InterPro" id="IPR050057">
    <property type="entry name" value="Prokaryotic/Mito_RF"/>
</dbReference>
<dbReference type="InterPro" id="IPR004373">
    <property type="entry name" value="RF-1"/>
</dbReference>
<dbReference type="NCBIfam" id="TIGR00019">
    <property type="entry name" value="prfA"/>
    <property type="match status" value="1"/>
</dbReference>
<dbReference type="NCBIfam" id="NF001859">
    <property type="entry name" value="PRK00591.1"/>
    <property type="match status" value="1"/>
</dbReference>
<dbReference type="PANTHER" id="PTHR43804">
    <property type="entry name" value="LD18447P"/>
    <property type="match status" value="1"/>
</dbReference>
<dbReference type="PANTHER" id="PTHR43804:SF7">
    <property type="entry name" value="LD18447P"/>
    <property type="match status" value="1"/>
</dbReference>
<dbReference type="Pfam" id="PF03462">
    <property type="entry name" value="PCRF"/>
    <property type="match status" value="1"/>
</dbReference>
<dbReference type="Pfam" id="PF00472">
    <property type="entry name" value="RF-1"/>
    <property type="match status" value="1"/>
</dbReference>
<dbReference type="SMART" id="SM00937">
    <property type="entry name" value="PCRF"/>
    <property type="match status" value="1"/>
</dbReference>
<dbReference type="SUPFAM" id="SSF75620">
    <property type="entry name" value="Release factor"/>
    <property type="match status" value="1"/>
</dbReference>
<dbReference type="PROSITE" id="PS00745">
    <property type="entry name" value="RF_PROK_I"/>
    <property type="match status" value="1"/>
</dbReference>
<organism>
    <name type="scientific">Psychrobacter cryohalolentis (strain ATCC BAA-1226 / DSM 17306 / VKM B-2378 / K5)</name>
    <dbReference type="NCBI Taxonomy" id="335284"/>
    <lineage>
        <taxon>Bacteria</taxon>
        <taxon>Pseudomonadati</taxon>
        <taxon>Pseudomonadota</taxon>
        <taxon>Gammaproteobacteria</taxon>
        <taxon>Moraxellales</taxon>
        <taxon>Moraxellaceae</taxon>
        <taxon>Psychrobacter</taxon>
    </lineage>
</organism>
<evidence type="ECO:0000255" key="1">
    <source>
        <dbReference type="HAMAP-Rule" id="MF_00093"/>
    </source>
</evidence>
<feature type="chain" id="PRO_0000263326" description="Peptide chain release factor 1">
    <location>
        <begin position="1"/>
        <end position="362"/>
    </location>
</feature>
<feature type="modified residue" description="N5-methylglutamine" evidence="1">
    <location>
        <position position="238"/>
    </location>
</feature>
<keyword id="KW-0963">Cytoplasm</keyword>
<keyword id="KW-0488">Methylation</keyword>
<keyword id="KW-0648">Protein biosynthesis</keyword>
<comment type="function">
    <text evidence="1">Peptide chain release factor 1 directs the termination of translation in response to the peptide chain termination codons UAG and UAA.</text>
</comment>
<comment type="subcellular location">
    <subcellularLocation>
        <location evidence="1">Cytoplasm</location>
    </subcellularLocation>
</comment>
<comment type="PTM">
    <text evidence="1">Methylated by PrmC. Methylation increases the termination efficiency of RF1.</text>
</comment>
<comment type="similarity">
    <text evidence="1">Belongs to the prokaryotic/mitochondrial release factor family.</text>
</comment>
<name>RF1_PSYCK</name>
<protein>
    <recommendedName>
        <fullName evidence="1">Peptide chain release factor 1</fullName>
        <shortName evidence="1">RF-1</shortName>
    </recommendedName>
</protein>
<reference key="1">
    <citation type="submission" date="2006-03" db="EMBL/GenBank/DDBJ databases">
        <title>Complete sequence of chromosome of Psychrobacter cryohalolentis K5.</title>
        <authorList>
            <consortium name="US DOE Joint Genome Institute"/>
            <person name="Copeland A."/>
            <person name="Lucas S."/>
            <person name="Lapidus A."/>
            <person name="Barry K."/>
            <person name="Detter J.C."/>
            <person name="Glavina T."/>
            <person name="Hammon N."/>
            <person name="Israni S."/>
            <person name="Dalin E."/>
            <person name="Tice H."/>
            <person name="Pitluck S."/>
            <person name="Brettin T."/>
            <person name="Bruce D."/>
            <person name="Han C."/>
            <person name="Tapia R."/>
            <person name="Sims D.R."/>
            <person name="Gilna P."/>
            <person name="Schmutz J."/>
            <person name="Larimer F."/>
            <person name="Land M."/>
            <person name="Hauser L."/>
            <person name="Kyrpides N."/>
            <person name="Kim E."/>
            <person name="Richardson P."/>
        </authorList>
    </citation>
    <scope>NUCLEOTIDE SEQUENCE [LARGE SCALE GENOMIC DNA]</scope>
    <source>
        <strain>ATCC BAA-1226 / DSM 17306 / VKM B-2378 / K5</strain>
    </source>
</reference>
<sequence length="362" mass="40583">MKESLRLRLDQMVDRYEEVTALLSDPSVISDNNKFRELSVEHSDLMDITTLWQNYVGAEKDQADAEAMLKEASDPDMKEMMQEEIDSARDTIVEMEEALNLMMLPKDPNDKVPAFLEIRAGTGGDEAAIFSGDLFRMYQKFAQNQGWTLEILSANEGEHGGYKEIITRVSGNSVYGRLKFESGVHRVQRVPDTESQGRVHTSACTVAVMPEVEIDDTVDLNPADIRFDTFRSSGAGGQHVNTTDSAVRLTHIPTGTVVECQQERSQHKNRAQAMKMLISKIQQVKVQAQVDAADTIRRDLVGSGDRSERIRTYNFPQGRMTDHRINLTLYKLDSIMEGDLDEILDALLREHQADLMASIGGA</sequence>
<gene>
    <name evidence="1" type="primary">prfA</name>
    <name type="ordered locus">Pcryo_1411</name>
</gene>
<accession>Q1QAW3</accession>
<proteinExistence type="inferred from homology"/>